<protein>
    <recommendedName>
        <fullName evidence="1">Histidine ammonia-lyase</fullName>
        <shortName evidence="1">Histidase</shortName>
        <ecNumber evidence="1">4.3.1.3</ecNumber>
    </recommendedName>
</protein>
<reference key="1">
    <citation type="journal article" date="2010" name="Genome Biol. Evol.">
        <title>Continuing evolution of Burkholderia mallei through genome reduction and large-scale rearrangements.</title>
        <authorList>
            <person name="Losada L."/>
            <person name="Ronning C.M."/>
            <person name="DeShazer D."/>
            <person name="Woods D."/>
            <person name="Fedorova N."/>
            <person name="Kim H.S."/>
            <person name="Shabalina S.A."/>
            <person name="Pearson T.R."/>
            <person name="Brinkac L."/>
            <person name="Tan P."/>
            <person name="Nandi T."/>
            <person name="Crabtree J."/>
            <person name="Badger J."/>
            <person name="Beckstrom-Sternberg S."/>
            <person name="Saqib M."/>
            <person name="Schutzer S.E."/>
            <person name="Keim P."/>
            <person name="Nierman W.C."/>
        </authorList>
    </citation>
    <scope>NUCLEOTIDE SEQUENCE [LARGE SCALE GENOMIC DNA]</scope>
    <source>
        <strain>1106a</strain>
    </source>
</reference>
<sequence length="507" mass="53111">MITLTPGRLTLPQLRRIARENVQIALDPASFAAIDRGAQAVADIAAKGEPAYGINTGFGRLASTHIPHDQLELLQKNLVLSHAVGVGEPMARPVVRLLMALKLSSLGRGHSGIRRVVMDALVTLFNADVLPLIPVKGSVGASGDLAPLAHMSAVLLGIGDVFIRGERASAAEGLRVAGLAPLTLEAKEGLALLNGTQASTALALDNLFAIEDLYRTALVSGALSVDAAAGSVKPFDARIHELRGHRGQIDAAAAYRSLLDGSAINVSHRDCDKVQDPYSLRCQPQVMGACLDQIRHAAGVLLIEANAVSDNPLIFPDTGEVLSGGNFHAEPVAFAADNLAIAAAEIGALAERRIALLIDATLSGLPPFLVKDGGVNSGFMIAHVTAAALASENKTLAHPASVDSLPTSANQEDHVSMATFAARKLADIAENVANILAIELLAAAQGVDLRAPHATSPALQHAMKTIRADVAHYDLDHYFAPDIAVVARRVRERAFATLSPLSFESEQ</sequence>
<keyword id="KW-0963">Cytoplasm</keyword>
<keyword id="KW-0369">Histidine metabolism</keyword>
<keyword id="KW-0456">Lyase</keyword>
<feature type="chain" id="PRO_1000021552" description="Histidine ammonia-lyase">
    <location>
        <begin position="1"/>
        <end position="507"/>
    </location>
</feature>
<feature type="modified residue" description="2,3-didehydroalanine (Ser)" evidence="1">
    <location>
        <position position="142"/>
    </location>
</feature>
<feature type="cross-link" description="5-imidazolinone (Ala-Gly)" evidence="1">
    <location>
        <begin position="141"/>
        <end position="143"/>
    </location>
</feature>
<proteinExistence type="inferred from homology"/>
<comment type="catalytic activity">
    <reaction evidence="1">
        <text>L-histidine = trans-urocanate + NH4(+)</text>
        <dbReference type="Rhea" id="RHEA:21232"/>
        <dbReference type="ChEBI" id="CHEBI:17771"/>
        <dbReference type="ChEBI" id="CHEBI:28938"/>
        <dbReference type="ChEBI" id="CHEBI:57595"/>
        <dbReference type="EC" id="4.3.1.3"/>
    </reaction>
</comment>
<comment type="pathway">
    <text evidence="1">Amino-acid degradation; L-histidine degradation into L-glutamate; N-formimidoyl-L-glutamate from L-histidine: step 1/3.</text>
</comment>
<comment type="subcellular location">
    <subcellularLocation>
        <location evidence="1">Cytoplasm</location>
    </subcellularLocation>
</comment>
<comment type="PTM">
    <text evidence="1">Contains an active site 4-methylidene-imidazol-5-one (MIO), which is formed autocatalytically by cyclization and dehydration of residues Ala-Ser-Gly.</text>
</comment>
<comment type="similarity">
    <text evidence="1">Belongs to the PAL/histidase family.</text>
</comment>
<gene>
    <name evidence="1" type="primary">hutH</name>
    <name type="ordered locus">BURPS1106A_2723</name>
</gene>
<accession>A3NXA3</accession>
<dbReference type="EC" id="4.3.1.3" evidence="1"/>
<dbReference type="EMBL" id="CP000572">
    <property type="protein sequence ID" value="ABN90158.1"/>
    <property type="molecule type" value="Genomic_DNA"/>
</dbReference>
<dbReference type="RefSeq" id="WP_004527399.1">
    <property type="nucleotide sequence ID" value="NC_009076.1"/>
</dbReference>
<dbReference type="SMR" id="A3NXA3"/>
<dbReference type="GeneID" id="93060915"/>
<dbReference type="KEGG" id="bpl:BURPS1106A_2723"/>
<dbReference type="HOGENOM" id="CLU_014801_4_0_4"/>
<dbReference type="UniPathway" id="UPA00379">
    <property type="reaction ID" value="UER00549"/>
</dbReference>
<dbReference type="Proteomes" id="UP000006738">
    <property type="component" value="Chromosome I"/>
</dbReference>
<dbReference type="GO" id="GO:0005737">
    <property type="term" value="C:cytoplasm"/>
    <property type="evidence" value="ECO:0007669"/>
    <property type="project" value="UniProtKB-SubCell"/>
</dbReference>
<dbReference type="GO" id="GO:0004397">
    <property type="term" value="F:histidine ammonia-lyase activity"/>
    <property type="evidence" value="ECO:0007669"/>
    <property type="project" value="UniProtKB-UniRule"/>
</dbReference>
<dbReference type="GO" id="GO:0019556">
    <property type="term" value="P:L-histidine catabolic process to glutamate and formamide"/>
    <property type="evidence" value="ECO:0007669"/>
    <property type="project" value="UniProtKB-UniPathway"/>
</dbReference>
<dbReference type="GO" id="GO:0019557">
    <property type="term" value="P:L-histidine catabolic process to glutamate and formate"/>
    <property type="evidence" value="ECO:0007669"/>
    <property type="project" value="UniProtKB-UniPathway"/>
</dbReference>
<dbReference type="CDD" id="cd00332">
    <property type="entry name" value="PAL-HAL"/>
    <property type="match status" value="1"/>
</dbReference>
<dbReference type="FunFam" id="1.10.275.10:FF:000005">
    <property type="entry name" value="Histidine ammonia-lyase"/>
    <property type="match status" value="1"/>
</dbReference>
<dbReference type="FunFam" id="1.20.200.10:FF:000003">
    <property type="entry name" value="Histidine ammonia-lyase"/>
    <property type="match status" value="1"/>
</dbReference>
<dbReference type="Gene3D" id="1.20.200.10">
    <property type="entry name" value="Fumarase/aspartase (Central domain)"/>
    <property type="match status" value="1"/>
</dbReference>
<dbReference type="Gene3D" id="1.10.275.10">
    <property type="entry name" value="Fumarase/aspartase (N-terminal domain)"/>
    <property type="match status" value="1"/>
</dbReference>
<dbReference type="HAMAP" id="MF_00229">
    <property type="entry name" value="His_ammonia_lyase"/>
    <property type="match status" value="1"/>
</dbReference>
<dbReference type="InterPro" id="IPR001106">
    <property type="entry name" value="Aromatic_Lyase"/>
</dbReference>
<dbReference type="InterPro" id="IPR024083">
    <property type="entry name" value="Fumarase/histidase_N"/>
</dbReference>
<dbReference type="InterPro" id="IPR005921">
    <property type="entry name" value="HutH"/>
</dbReference>
<dbReference type="InterPro" id="IPR008948">
    <property type="entry name" value="L-Aspartase-like"/>
</dbReference>
<dbReference type="InterPro" id="IPR022313">
    <property type="entry name" value="Phe/His_NH3-lyase_AS"/>
</dbReference>
<dbReference type="NCBIfam" id="TIGR01225">
    <property type="entry name" value="hutH"/>
    <property type="match status" value="1"/>
</dbReference>
<dbReference type="NCBIfam" id="NF006871">
    <property type="entry name" value="PRK09367.1"/>
    <property type="match status" value="1"/>
</dbReference>
<dbReference type="PANTHER" id="PTHR10362">
    <property type="entry name" value="HISTIDINE AMMONIA-LYASE"/>
    <property type="match status" value="1"/>
</dbReference>
<dbReference type="Pfam" id="PF00221">
    <property type="entry name" value="Lyase_aromatic"/>
    <property type="match status" value="1"/>
</dbReference>
<dbReference type="SUPFAM" id="SSF48557">
    <property type="entry name" value="L-aspartase-like"/>
    <property type="match status" value="1"/>
</dbReference>
<dbReference type="PROSITE" id="PS00488">
    <property type="entry name" value="PAL_HISTIDASE"/>
    <property type="match status" value="1"/>
</dbReference>
<evidence type="ECO:0000255" key="1">
    <source>
        <dbReference type="HAMAP-Rule" id="MF_00229"/>
    </source>
</evidence>
<organism>
    <name type="scientific">Burkholderia pseudomallei (strain 1106a)</name>
    <dbReference type="NCBI Taxonomy" id="357348"/>
    <lineage>
        <taxon>Bacteria</taxon>
        <taxon>Pseudomonadati</taxon>
        <taxon>Pseudomonadota</taxon>
        <taxon>Betaproteobacteria</taxon>
        <taxon>Burkholderiales</taxon>
        <taxon>Burkholderiaceae</taxon>
        <taxon>Burkholderia</taxon>
        <taxon>pseudomallei group</taxon>
    </lineage>
</organism>
<name>HUTH_BURP0</name>